<comment type="function">
    <text>Required for translation of SpoIIID.</text>
</comment>
<feature type="chain" id="PRO_0000065724" description="Protein usd">
    <location>
        <begin position="1"/>
        <end position="36"/>
    </location>
</feature>
<dbReference type="EMBL" id="AL009126">
    <property type="protein sequence ID" value="CAB15660.1"/>
    <property type="molecule type" value="Genomic_DNA"/>
</dbReference>
<dbReference type="PIR" id="E69729">
    <property type="entry name" value="E69729"/>
</dbReference>
<dbReference type="RefSeq" id="NP_391524.1">
    <property type="nucleotide sequence ID" value="NC_000964.3"/>
</dbReference>
<dbReference type="RefSeq" id="WP_010886628.1">
    <property type="nucleotide sequence ID" value="NZ_OZ025638.1"/>
</dbReference>
<dbReference type="FunCoup" id="O32276">
    <property type="interactions" value="10"/>
</dbReference>
<dbReference type="STRING" id="224308.BSU36430"/>
<dbReference type="PaxDb" id="224308-BSU36430"/>
<dbReference type="EnsemblBacteria" id="CAB15660">
    <property type="protein sequence ID" value="CAB15660"/>
    <property type="gene ID" value="BSU_36430"/>
</dbReference>
<dbReference type="GeneID" id="938188"/>
<dbReference type="KEGG" id="bsu:BSU36430"/>
<dbReference type="InParanoid" id="O32276"/>
<dbReference type="OrthoDB" id="2891518at2"/>
<dbReference type="BioCyc" id="BSUB:BSU36430-MONOMER"/>
<dbReference type="Proteomes" id="UP000001570">
    <property type="component" value="Chromosome"/>
</dbReference>
<proteinExistence type="predicted"/>
<protein>
    <recommendedName>
        <fullName>Protein usd</fullName>
    </recommendedName>
</protein>
<gene>
    <name type="primary">usd</name>
    <name type="ordered locus">BSU36430</name>
</gene>
<keyword id="KW-1185">Reference proteome</keyword>
<name>USD_BACSU</name>
<accession>O32276</accession>
<reference key="1">
    <citation type="journal article" date="1997" name="Nature">
        <title>The complete genome sequence of the Gram-positive bacterium Bacillus subtilis.</title>
        <authorList>
            <person name="Kunst F."/>
            <person name="Ogasawara N."/>
            <person name="Moszer I."/>
            <person name="Albertini A.M."/>
            <person name="Alloni G."/>
            <person name="Azevedo V."/>
            <person name="Bertero M.G."/>
            <person name="Bessieres P."/>
            <person name="Bolotin A."/>
            <person name="Borchert S."/>
            <person name="Borriss R."/>
            <person name="Boursier L."/>
            <person name="Brans A."/>
            <person name="Braun M."/>
            <person name="Brignell S.C."/>
            <person name="Bron S."/>
            <person name="Brouillet S."/>
            <person name="Bruschi C.V."/>
            <person name="Caldwell B."/>
            <person name="Capuano V."/>
            <person name="Carter N.M."/>
            <person name="Choi S.-K."/>
            <person name="Codani J.-J."/>
            <person name="Connerton I.F."/>
            <person name="Cummings N.J."/>
            <person name="Daniel R.A."/>
            <person name="Denizot F."/>
            <person name="Devine K.M."/>
            <person name="Duesterhoeft A."/>
            <person name="Ehrlich S.D."/>
            <person name="Emmerson P.T."/>
            <person name="Entian K.-D."/>
            <person name="Errington J."/>
            <person name="Fabret C."/>
            <person name="Ferrari E."/>
            <person name="Foulger D."/>
            <person name="Fritz C."/>
            <person name="Fujita M."/>
            <person name="Fujita Y."/>
            <person name="Fuma S."/>
            <person name="Galizzi A."/>
            <person name="Galleron N."/>
            <person name="Ghim S.-Y."/>
            <person name="Glaser P."/>
            <person name="Goffeau A."/>
            <person name="Golightly E.J."/>
            <person name="Grandi G."/>
            <person name="Guiseppi G."/>
            <person name="Guy B.J."/>
            <person name="Haga K."/>
            <person name="Haiech J."/>
            <person name="Harwood C.R."/>
            <person name="Henaut A."/>
            <person name="Hilbert H."/>
            <person name="Holsappel S."/>
            <person name="Hosono S."/>
            <person name="Hullo M.-F."/>
            <person name="Itaya M."/>
            <person name="Jones L.-M."/>
            <person name="Joris B."/>
            <person name="Karamata D."/>
            <person name="Kasahara Y."/>
            <person name="Klaerr-Blanchard M."/>
            <person name="Klein C."/>
            <person name="Kobayashi Y."/>
            <person name="Koetter P."/>
            <person name="Koningstein G."/>
            <person name="Krogh S."/>
            <person name="Kumano M."/>
            <person name="Kurita K."/>
            <person name="Lapidus A."/>
            <person name="Lardinois S."/>
            <person name="Lauber J."/>
            <person name="Lazarevic V."/>
            <person name="Lee S.-M."/>
            <person name="Levine A."/>
            <person name="Liu H."/>
            <person name="Masuda S."/>
            <person name="Mauel C."/>
            <person name="Medigue C."/>
            <person name="Medina N."/>
            <person name="Mellado R.P."/>
            <person name="Mizuno M."/>
            <person name="Moestl D."/>
            <person name="Nakai S."/>
            <person name="Noback M."/>
            <person name="Noone D."/>
            <person name="O'Reilly M."/>
            <person name="Ogawa K."/>
            <person name="Ogiwara A."/>
            <person name="Oudega B."/>
            <person name="Park S.-H."/>
            <person name="Parro V."/>
            <person name="Pohl T.M."/>
            <person name="Portetelle D."/>
            <person name="Porwollik S."/>
            <person name="Prescott A.M."/>
            <person name="Presecan E."/>
            <person name="Pujic P."/>
            <person name="Purnelle B."/>
            <person name="Rapoport G."/>
            <person name="Rey M."/>
            <person name="Reynolds S."/>
            <person name="Rieger M."/>
            <person name="Rivolta C."/>
            <person name="Rocha E."/>
            <person name="Roche B."/>
            <person name="Rose M."/>
            <person name="Sadaie Y."/>
            <person name="Sato T."/>
            <person name="Scanlan E."/>
            <person name="Schleich S."/>
            <person name="Schroeter R."/>
            <person name="Scoffone F."/>
            <person name="Sekiguchi J."/>
            <person name="Sekowska A."/>
            <person name="Seror S.J."/>
            <person name="Serror P."/>
            <person name="Shin B.-S."/>
            <person name="Soldo B."/>
            <person name="Sorokin A."/>
            <person name="Tacconi E."/>
            <person name="Takagi T."/>
            <person name="Takahashi H."/>
            <person name="Takemaru K."/>
            <person name="Takeuchi M."/>
            <person name="Tamakoshi A."/>
            <person name="Tanaka T."/>
            <person name="Terpstra P."/>
            <person name="Tognoni A."/>
            <person name="Tosato V."/>
            <person name="Uchiyama S."/>
            <person name="Vandenbol M."/>
            <person name="Vannier F."/>
            <person name="Vassarotti A."/>
            <person name="Viari A."/>
            <person name="Wambutt R."/>
            <person name="Wedler E."/>
            <person name="Wedler H."/>
            <person name="Weitzenegger T."/>
            <person name="Winters P."/>
            <person name="Wipat A."/>
            <person name="Yamamoto H."/>
            <person name="Yamane K."/>
            <person name="Yasumoto K."/>
            <person name="Yata K."/>
            <person name="Yoshida K."/>
            <person name="Yoshikawa H.-F."/>
            <person name="Zumstein E."/>
            <person name="Yoshikawa H."/>
            <person name="Danchin A."/>
        </authorList>
    </citation>
    <scope>NUCLEOTIDE SEQUENCE [LARGE SCALE GENOMIC DNA]</scope>
    <source>
        <strain>168</strain>
    </source>
</reference>
<organism>
    <name type="scientific">Bacillus subtilis (strain 168)</name>
    <dbReference type="NCBI Taxonomy" id="224308"/>
    <lineage>
        <taxon>Bacteria</taxon>
        <taxon>Bacillati</taxon>
        <taxon>Bacillota</taxon>
        <taxon>Bacilli</taxon>
        <taxon>Bacillales</taxon>
        <taxon>Bacillaceae</taxon>
        <taxon>Bacillus</taxon>
    </lineage>
</organism>
<sequence length="36" mass="4219">MGIFHKLTFKTIQRRSGIMNDSLQNTDLISHFSHPF</sequence>